<feature type="propeptide" id="PRO_0000397278" description="Removed in mature form; by autocatalysis" evidence="1">
    <location>
        <begin position="1"/>
        <end position="12"/>
    </location>
</feature>
<feature type="chain" id="PRO_0000397279" description="Proteasome subunit beta">
    <location>
        <begin position="13"/>
        <end position="215"/>
    </location>
</feature>
<feature type="active site" description="Nucleophile" evidence="1">
    <location>
        <position position="13"/>
    </location>
</feature>
<comment type="function">
    <text evidence="1">Component of the proteasome core, a large protease complex with broad specificity involved in protein degradation.</text>
</comment>
<comment type="catalytic activity">
    <reaction evidence="1">
        <text>Cleavage of peptide bonds with very broad specificity.</text>
        <dbReference type="EC" id="3.4.25.1"/>
    </reaction>
</comment>
<comment type="activity regulation">
    <text evidence="1">The formation of the proteasomal ATPase PAN-20S proteasome complex, via the docking of the C-termini of PAN into the intersubunit pockets in the alpha-rings, triggers opening of the gate for substrate entry. Interconversion between the open-gate and close-gate conformations leads to a dynamic regulation of the 20S proteasome proteolysis activity.</text>
</comment>
<comment type="subunit">
    <text evidence="1">The 20S proteasome core is composed of 14 alpha and 14 beta subunits that assemble into four stacked heptameric rings, resulting in a barrel-shaped structure. The two inner rings, each composed of seven catalytic beta subunits, are sandwiched by two outer rings, each composed of seven alpha subunits. The catalytic chamber with the active sites is on the inside of the barrel. Has a gated structure, the ends of the cylinder being occluded by the N-termini of the alpha-subunits. Is capped at one or both ends by the proteasome regulatory ATPase, PAN.</text>
</comment>
<comment type="subcellular location">
    <subcellularLocation>
        <location evidence="1">Cytoplasm</location>
    </subcellularLocation>
</comment>
<comment type="similarity">
    <text evidence="1">Belongs to the peptidase T1B family.</text>
</comment>
<protein>
    <recommendedName>
        <fullName evidence="1">Proteasome subunit beta</fullName>
        <ecNumber evidence="1">3.4.25.1</ecNumber>
    </recommendedName>
    <alternativeName>
        <fullName evidence="1">20S proteasome beta subunit</fullName>
    </alternativeName>
    <alternativeName>
        <fullName evidence="1">Proteasome core protein PsmB</fullName>
    </alternativeName>
</protein>
<dbReference type="EC" id="3.4.25.1" evidence="1"/>
<dbReference type="EMBL" id="CP001857">
    <property type="protein sequence ID" value="ADB57509.1"/>
    <property type="molecule type" value="Genomic_DNA"/>
</dbReference>
<dbReference type="RefSeq" id="WP_012939845.1">
    <property type="nucleotide sequence ID" value="NC_013741.1"/>
</dbReference>
<dbReference type="SMR" id="D2RGT4"/>
<dbReference type="STRING" id="572546.Arcpr_0441"/>
<dbReference type="MEROPS" id="T01.002"/>
<dbReference type="PaxDb" id="572546-Arcpr_0441"/>
<dbReference type="GeneID" id="8739099"/>
<dbReference type="KEGG" id="apo:Arcpr_0441"/>
<dbReference type="eggNOG" id="arCOG00970">
    <property type="taxonomic scope" value="Archaea"/>
</dbReference>
<dbReference type="HOGENOM" id="CLU_035750_7_2_2"/>
<dbReference type="OrthoDB" id="6330at2157"/>
<dbReference type="Proteomes" id="UP000001901">
    <property type="component" value="Chromosome"/>
</dbReference>
<dbReference type="GO" id="GO:0005737">
    <property type="term" value="C:cytoplasm"/>
    <property type="evidence" value="ECO:0007669"/>
    <property type="project" value="UniProtKB-SubCell"/>
</dbReference>
<dbReference type="GO" id="GO:0019774">
    <property type="term" value="C:proteasome core complex, beta-subunit complex"/>
    <property type="evidence" value="ECO:0007669"/>
    <property type="project" value="UniProtKB-UniRule"/>
</dbReference>
<dbReference type="GO" id="GO:0004298">
    <property type="term" value="F:threonine-type endopeptidase activity"/>
    <property type="evidence" value="ECO:0007669"/>
    <property type="project" value="UniProtKB-UniRule"/>
</dbReference>
<dbReference type="GO" id="GO:0010498">
    <property type="term" value="P:proteasomal protein catabolic process"/>
    <property type="evidence" value="ECO:0007669"/>
    <property type="project" value="UniProtKB-UniRule"/>
</dbReference>
<dbReference type="CDD" id="cd03764">
    <property type="entry name" value="proteasome_beta_archeal"/>
    <property type="match status" value="1"/>
</dbReference>
<dbReference type="FunFam" id="3.60.20.10:FF:000049">
    <property type="entry name" value="Proteasome subunit beta"/>
    <property type="match status" value="1"/>
</dbReference>
<dbReference type="Gene3D" id="3.60.20.10">
    <property type="entry name" value="Glutamine Phosphoribosylpyrophosphate, subunit 1, domain 1"/>
    <property type="match status" value="1"/>
</dbReference>
<dbReference type="HAMAP" id="MF_02113_A">
    <property type="entry name" value="Proteasome_B_A"/>
    <property type="match status" value="1"/>
</dbReference>
<dbReference type="InterPro" id="IPR029055">
    <property type="entry name" value="Ntn_hydrolases_N"/>
</dbReference>
<dbReference type="InterPro" id="IPR019983">
    <property type="entry name" value="Pept_T1A_Psome_bsu_arc"/>
</dbReference>
<dbReference type="InterPro" id="IPR000243">
    <property type="entry name" value="Pept_T1A_subB"/>
</dbReference>
<dbReference type="InterPro" id="IPR016050">
    <property type="entry name" value="Proteasome_bsu_CS"/>
</dbReference>
<dbReference type="InterPro" id="IPR001353">
    <property type="entry name" value="Proteasome_sua/b"/>
</dbReference>
<dbReference type="InterPro" id="IPR023333">
    <property type="entry name" value="Proteasome_suB-type"/>
</dbReference>
<dbReference type="NCBIfam" id="TIGR03634">
    <property type="entry name" value="arc_protsome_B"/>
    <property type="match status" value="1"/>
</dbReference>
<dbReference type="PANTHER" id="PTHR32194">
    <property type="entry name" value="METALLOPROTEASE TLDD"/>
    <property type="match status" value="1"/>
</dbReference>
<dbReference type="PANTHER" id="PTHR32194:SF3">
    <property type="entry name" value="PROTEASOME SUBUNIT BETA"/>
    <property type="match status" value="1"/>
</dbReference>
<dbReference type="Pfam" id="PF00227">
    <property type="entry name" value="Proteasome"/>
    <property type="match status" value="1"/>
</dbReference>
<dbReference type="PRINTS" id="PR00141">
    <property type="entry name" value="PROTEASOME"/>
</dbReference>
<dbReference type="SUPFAM" id="SSF56235">
    <property type="entry name" value="N-terminal nucleophile aminohydrolases (Ntn hydrolases)"/>
    <property type="match status" value="1"/>
</dbReference>
<dbReference type="PROSITE" id="PS00854">
    <property type="entry name" value="PROTEASOME_BETA_1"/>
    <property type="match status" value="1"/>
</dbReference>
<dbReference type="PROSITE" id="PS51476">
    <property type="entry name" value="PROTEASOME_BETA_2"/>
    <property type="match status" value="1"/>
</dbReference>
<organism>
    <name type="scientific">Archaeoglobus profundus (strain DSM 5631 / JCM 9629 / NBRC 100127 / Av18)</name>
    <dbReference type="NCBI Taxonomy" id="572546"/>
    <lineage>
        <taxon>Archaea</taxon>
        <taxon>Methanobacteriati</taxon>
        <taxon>Methanobacteriota</taxon>
        <taxon>Archaeoglobi</taxon>
        <taxon>Archaeoglobales</taxon>
        <taxon>Archaeoglobaceae</taxon>
        <taxon>Archaeoglobus</taxon>
    </lineage>
</organism>
<sequence>MLGEIQDKVYKGTTTVGLVCKDGVVLATEKRATMGNFIASRRAKKIYRIADRVAMTTAGAVGDAQFLARLISVEIKLYEIRKEEKPTVKAIATLLSNILNSVRWFPYFVQLLVGGVDKRGPSIYSIDLLGGAIEEIDIVATGSGSPTAYGVLEDRYTPEITVDDGVELAVRAIYSAMRRDSASGDGIDVVKITKDGYFELSKEEVDKILSSLRRA</sequence>
<accession>D2RGT4</accession>
<proteinExistence type="inferred from homology"/>
<name>PSB_ARCPA</name>
<evidence type="ECO:0000255" key="1">
    <source>
        <dbReference type="HAMAP-Rule" id="MF_02113"/>
    </source>
</evidence>
<gene>
    <name evidence="1" type="primary">psmB</name>
    <name type="ordered locus">Arcpr_0441</name>
</gene>
<reference key="1">
    <citation type="journal article" date="2010" name="Stand. Genomic Sci.">
        <title>Complete genome sequence of Archaeoglobus profundus type strain (AV18).</title>
        <authorList>
            <person name="von Jan M."/>
            <person name="Lapidus A."/>
            <person name="Del Rio T.G."/>
            <person name="Copeland A."/>
            <person name="Tice H."/>
            <person name="Cheng J.F."/>
            <person name="Lucas S."/>
            <person name="Chen F."/>
            <person name="Nolan M."/>
            <person name="Goodwin L."/>
            <person name="Han C."/>
            <person name="Pitluck S."/>
            <person name="Liolios K."/>
            <person name="Ivanova N."/>
            <person name="Mavromatis K."/>
            <person name="Ovchinnikova G."/>
            <person name="Chertkov O."/>
            <person name="Pati A."/>
            <person name="Chen A."/>
            <person name="Palaniappan K."/>
            <person name="Land M."/>
            <person name="Hauser L."/>
            <person name="Chang Y.J."/>
            <person name="Jeffries C.D."/>
            <person name="Saunders E."/>
            <person name="Brettin T."/>
            <person name="Detter J.C."/>
            <person name="Chain P."/>
            <person name="Eichinger K."/>
            <person name="Huber H."/>
            <person name="Spring S."/>
            <person name="Rohde M."/>
            <person name="Goker M."/>
            <person name="Wirth R."/>
            <person name="Woyke T."/>
            <person name="Bristow J."/>
            <person name="Eisen J.A."/>
            <person name="Markowitz V."/>
            <person name="Hugenholtz P."/>
            <person name="Kyrpides N.C."/>
            <person name="Klenk H.P."/>
        </authorList>
    </citation>
    <scope>NUCLEOTIDE SEQUENCE [LARGE SCALE GENOMIC DNA]</scope>
    <source>
        <strain>DSM 5631 / JCM 9629 / NBRC 100127 / Av18</strain>
    </source>
</reference>
<keyword id="KW-0068">Autocatalytic cleavage</keyword>
<keyword id="KW-0963">Cytoplasm</keyword>
<keyword id="KW-0378">Hydrolase</keyword>
<keyword id="KW-0645">Protease</keyword>
<keyword id="KW-0647">Proteasome</keyword>
<keyword id="KW-1185">Reference proteome</keyword>
<keyword id="KW-0888">Threonine protease</keyword>
<keyword id="KW-0865">Zymogen</keyword>